<keyword id="KW-0963">Cytoplasm</keyword>
<keyword id="KW-0369">Histidine metabolism</keyword>
<keyword id="KW-0456">Lyase</keyword>
<keyword id="KW-0520">NAD</keyword>
<dbReference type="EC" id="4.2.1.49" evidence="1"/>
<dbReference type="EMBL" id="CP000950">
    <property type="protein sequence ID" value="ACA66390.1"/>
    <property type="molecule type" value="Genomic_DNA"/>
</dbReference>
<dbReference type="RefSeq" id="WP_002209576.1">
    <property type="nucleotide sequence ID" value="NZ_CP009792.1"/>
</dbReference>
<dbReference type="SMR" id="B1JH60"/>
<dbReference type="GeneID" id="57974694"/>
<dbReference type="KEGG" id="ypy:YPK_0076"/>
<dbReference type="PATRIC" id="fig|502800.11.peg.678"/>
<dbReference type="UniPathway" id="UPA00379">
    <property type="reaction ID" value="UER00550"/>
</dbReference>
<dbReference type="GO" id="GO:0005737">
    <property type="term" value="C:cytoplasm"/>
    <property type="evidence" value="ECO:0007669"/>
    <property type="project" value="UniProtKB-SubCell"/>
</dbReference>
<dbReference type="GO" id="GO:0016153">
    <property type="term" value="F:urocanate hydratase activity"/>
    <property type="evidence" value="ECO:0007669"/>
    <property type="project" value="UniProtKB-UniRule"/>
</dbReference>
<dbReference type="GO" id="GO:0019556">
    <property type="term" value="P:L-histidine catabolic process to glutamate and formamide"/>
    <property type="evidence" value="ECO:0007669"/>
    <property type="project" value="UniProtKB-UniPathway"/>
</dbReference>
<dbReference type="GO" id="GO:0019557">
    <property type="term" value="P:L-histidine catabolic process to glutamate and formate"/>
    <property type="evidence" value="ECO:0007669"/>
    <property type="project" value="UniProtKB-UniPathway"/>
</dbReference>
<dbReference type="FunFam" id="3.40.50.10730:FF:000001">
    <property type="entry name" value="Urocanate hydratase"/>
    <property type="match status" value="1"/>
</dbReference>
<dbReference type="Gene3D" id="3.40.50.10730">
    <property type="entry name" value="Urocanase like domains"/>
    <property type="match status" value="1"/>
</dbReference>
<dbReference type="Gene3D" id="3.40.1770.10">
    <property type="entry name" value="Urocanase superfamily"/>
    <property type="match status" value="1"/>
</dbReference>
<dbReference type="HAMAP" id="MF_00577">
    <property type="entry name" value="HutU"/>
    <property type="match status" value="1"/>
</dbReference>
<dbReference type="InterPro" id="IPR055351">
    <property type="entry name" value="Urocanase"/>
</dbReference>
<dbReference type="InterPro" id="IPR023637">
    <property type="entry name" value="Urocanase-like"/>
</dbReference>
<dbReference type="InterPro" id="IPR035401">
    <property type="entry name" value="Urocanase_C"/>
</dbReference>
<dbReference type="InterPro" id="IPR038364">
    <property type="entry name" value="Urocanase_central_sf"/>
</dbReference>
<dbReference type="InterPro" id="IPR023636">
    <property type="entry name" value="Urocanase_CS"/>
</dbReference>
<dbReference type="InterPro" id="IPR035400">
    <property type="entry name" value="Urocanase_N"/>
</dbReference>
<dbReference type="InterPro" id="IPR035085">
    <property type="entry name" value="Urocanase_Rossmann-like"/>
</dbReference>
<dbReference type="InterPro" id="IPR036190">
    <property type="entry name" value="Urocanase_sf"/>
</dbReference>
<dbReference type="NCBIfam" id="TIGR01228">
    <property type="entry name" value="hutU"/>
    <property type="match status" value="1"/>
</dbReference>
<dbReference type="NCBIfam" id="NF003820">
    <property type="entry name" value="PRK05414.1"/>
    <property type="match status" value="1"/>
</dbReference>
<dbReference type="PANTHER" id="PTHR12216">
    <property type="entry name" value="UROCANATE HYDRATASE"/>
    <property type="match status" value="1"/>
</dbReference>
<dbReference type="PANTHER" id="PTHR12216:SF4">
    <property type="entry name" value="UROCANATE HYDRATASE"/>
    <property type="match status" value="1"/>
</dbReference>
<dbReference type="Pfam" id="PF01175">
    <property type="entry name" value="Urocanase"/>
    <property type="match status" value="1"/>
</dbReference>
<dbReference type="Pfam" id="PF17392">
    <property type="entry name" value="Urocanase_C"/>
    <property type="match status" value="1"/>
</dbReference>
<dbReference type="Pfam" id="PF17391">
    <property type="entry name" value="Urocanase_N"/>
    <property type="match status" value="1"/>
</dbReference>
<dbReference type="PIRSF" id="PIRSF001423">
    <property type="entry name" value="Urocanate_hydrat"/>
    <property type="match status" value="1"/>
</dbReference>
<dbReference type="SUPFAM" id="SSF111326">
    <property type="entry name" value="Urocanase"/>
    <property type="match status" value="1"/>
</dbReference>
<dbReference type="PROSITE" id="PS01233">
    <property type="entry name" value="UROCANASE"/>
    <property type="match status" value="1"/>
</dbReference>
<protein>
    <recommendedName>
        <fullName evidence="1">Urocanate hydratase</fullName>
        <shortName evidence="1">Urocanase</shortName>
        <ecNumber evidence="1">4.2.1.49</ecNumber>
    </recommendedName>
    <alternativeName>
        <fullName evidence="1">Imidazolonepropionate hydrolase</fullName>
    </alternativeName>
</protein>
<evidence type="ECO:0000255" key="1">
    <source>
        <dbReference type="HAMAP-Rule" id="MF_00577"/>
    </source>
</evidence>
<proteinExistence type="inferred from homology"/>
<reference key="1">
    <citation type="submission" date="2008-02" db="EMBL/GenBank/DDBJ databases">
        <title>Complete sequence of Yersinia pseudotuberculosis YPIII.</title>
        <authorList>
            <consortium name="US DOE Joint Genome Institute"/>
            <person name="Copeland A."/>
            <person name="Lucas S."/>
            <person name="Lapidus A."/>
            <person name="Glavina del Rio T."/>
            <person name="Dalin E."/>
            <person name="Tice H."/>
            <person name="Bruce D."/>
            <person name="Goodwin L."/>
            <person name="Pitluck S."/>
            <person name="Munk A.C."/>
            <person name="Brettin T."/>
            <person name="Detter J.C."/>
            <person name="Han C."/>
            <person name="Tapia R."/>
            <person name="Schmutz J."/>
            <person name="Larimer F."/>
            <person name="Land M."/>
            <person name="Hauser L."/>
            <person name="Challacombe J.F."/>
            <person name="Green L."/>
            <person name="Lindler L.E."/>
            <person name="Nikolich M.P."/>
            <person name="Richardson P."/>
        </authorList>
    </citation>
    <scope>NUCLEOTIDE SEQUENCE [LARGE SCALE GENOMIC DNA]</scope>
    <source>
        <strain>YPIII</strain>
    </source>
</reference>
<accession>B1JH60</accession>
<gene>
    <name evidence="1" type="primary">hutU</name>
    <name type="ordered locus">YPK_0076</name>
</gene>
<comment type="function">
    <text evidence="1">Catalyzes the conversion of urocanate to 4-imidazolone-5-propionate.</text>
</comment>
<comment type="catalytic activity">
    <reaction evidence="1">
        <text>4-imidazolone-5-propanoate = trans-urocanate + H2O</text>
        <dbReference type="Rhea" id="RHEA:13101"/>
        <dbReference type="ChEBI" id="CHEBI:15377"/>
        <dbReference type="ChEBI" id="CHEBI:17771"/>
        <dbReference type="ChEBI" id="CHEBI:77893"/>
        <dbReference type="EC" id="4.2.1.49"/>
    </reaction>
</comment>
<comment type="cofactor">
    <cofactor evidence="1">
        <name>NAD(+)</name>
        <dbReference type="ChEBI" id="CHEBI:57540"/>
    </cofactor>
    <text evidence="1">Binds 1 NAD(+) per subunit.</text>
</comment>
<comment type="pathway">
    <text evidence="1">Amino-acid degradation; L-histidine degradation into L-glutamate; N-formimidoyl-L-glutamate from L-histidine: step 2/3.</text>
</comment>
<comment type="subcellular location">
    <subcellularLocation>
        <location evidence="1">Cytoplasm</location>
    </subcellularLocation>
</comment>
<comment type="similarity">
    <text evidence="1">Belongs to the urocanase family.</text>
</comment>
<feature type="chain" id="PRO_1000129584" description="Urocanate hydratase">
    <location>
        <begin position="1"/>
        <end position="563"/>
    </location>
</feature>
<feature type="active site" evidence="1">
    <location>
        <position position="411"/>
    </location>
</feature>
<feature type="binding site" evidence="1">
    <location>
        <begin position="53"/>
        <end position="54"/>
    </location>
    <ligand>
        <name>NAD(+)</name>
        <dbReference type="ChEBI" id="CHEBI:57540"/>
    </ligand>
</feature>
<feature type="binding site" evidence="1">
    <location>
        <position position="131"/>
    </location>
    <ligand>
        <name>NAD(+)</name>
        <dbReference type="ChEBI" id="CHEBI:57540"/>
    </ligand>
</feature>
<feature type="binding site" evidence="1">
    <location>
        <begin position="177"/>
        <end position="179"/>
    </location>
    <ligand>
        <name>NAD(+)</name>
        <dbReference type="ChEBI" id="CHEBI:57540"/>
    </ligand>
</feature>
<feature type="binding site" evidence="1">
    <location>
        <position position="197"/>
    </location>
    <ligand>
        <name>NAD(+)</name>
        <dbReference type="ChEBI" id="CHEBI:57540"/>
    </ligand>
</feature>
<feature type="binding site" evidence="1">
    <location>
        <position position="202"/>
    </location>
    <ligand>
        <name>NAD(+)</name>
        <dbReference type="ChEBI" id="CHEBI:57540"/>
    </ligand>
</feature>
<feature type="binding site" evidence="1">
    <location>
        <begin position="243"/>
        <end position="244"/>
    </location>
    <ligand>
        <name>NAD(+)</name>
        <dbReference type="ChEBI" id="CHEBI:57540"/>
    </ligand>
</feature>
<feature type="binding site" evidence="1">
    <location>
        <begin position="264"/>
        <end position="268"/>
    </location>
    <ligand>
        <name>NAD(+)</name>
        <dbReference type="ChEBI" id="CHEBI:57540"/>
    </ligand>
</feature>
<feature type="binding site" evidence="1">
    <location>
        <begin position="274"/>
        <end position="275"/>
    </location>
    <ligand>
        <name>NAD(+)</name>
        <dbReference type="ChEBI" id="CHEBI:57540"/>
    </ligand>
</feature>
<feature type="binding site" evidence="1">
    <location>
        <position position="323"/>
    </location>
    <ligand>
        <name>NAD(+)</name>
        <dbReference type="ChEBI" id="CHEBI:57540"/>
    </ligand>
</feature>
<feature type="binding site" evidence="1">
    <location>
        <position position="493"/>
    </location>
    <ligand>
        <name>NAD(+)</name>
        <dbReference type="ChEBI" id="CHEBI:57540"/>
    </ligand>
</feature>
<sequence length="563" mass="61535">MTTQNRFRDNEIRAPQGTQLTAKSWLTEAALRMLMNNLDPDVAENPKELVVYGGIGRAARNWECYDKIVESLINLNDDETLLIQSGKPVGIFKTHSNAPRVLIANSNLVPHWANWEHFNELDAKGLAMYGQMTAGSWIYIGSQGIVQGTYETFVEAGRQHFGGSLKGRWVLTAGLGGMGGAQPLAATLAGACSLNIECQQSRIDFRLKTRYVDEQATDLDDALARIEKYTATGVAVSIALCGNAAEILPELVRRGVRPDMVTDQTSAHDPLNGYLPKGWNWEEYRQRAQHEPALVINAAKISMAEHVEAMLAFHNMGIPTFDYGNNIRQMAHDMGVIRAFDFPGFVPAYIRPLFCRGIGPFRWVALSGNPDDIYKTDAKVKALIPDDAHLHHWLDMARERIRFQGLPARICWVGLGQRAKLGLAFNEMVRSGELSAPVVIGRDHLDSGSVASPNRETEAMQDGSDAVSDWPLLNALLNTASGATWVSLHHGGGVGMGFSQHSGMVVVCDGSDEAAERIARVLHNDPATGVMRHADAGYDIAVNCAQEQGLNLPMVAATQGKKS</sequence>
<name>HUTU_YERPY</name>
<organism>
    <name type="scientific">Yersinia pseudotuberculosis serotype O:3 (strain YPIII)</name>
    <dbReference type="NCBI Taxonomy" id="502800"/>
    <lineage>
        <taxon>Bacteria</taxon>
        <taxon>Pseudomonadati</taxon>
        <taxon>Pseudomonadota</taxon>
        <taxon>Gammaproteobacteria</taxon>
        <taxon>Enterobacterales</taxon>
        <taxon>Yersiniaceae</taxon>
        <taxon>Yersinia</taxon>
    </lineage>
</organism>